<reference key="1">
    <citation type="journal article" date="2003" name="Oncogene">
        <title>Large-scale identification and characterization of human genes that activate NF-kappaB and MAPK signaling pathways.</title>
        <authorList>
            <person name="Matsuda A."/>
            <person name="Suzuki Y."/>
            <person name="Honda G."/>
            <person name="Muramatsu S."/>
            <person name="Matsuzaki O."/>
            <person name="Nagano Y."/>
            <person name="Doi T."/>
            <person name="Shimotohno K."/>
            <person name="Harada T."/>
            <person name="Nishida E."/>
            <person name="Hayashi H."/>
            <person name="Sugano S."/>
        </authorList>
    </citation>
    <scope>NUCLEOTIDE SEQUENCE [LARGE SCALE MRNA]</scope>
    <scope>FUNCTION</scope>
    <source>
        <tissue>Lung fibroblast</tissue>
    </source>
</reference>
<reference key="2">
    <citation type="journal article" date="2004" name="Genome Biol.">
        <title>A genome annotation-driven approach to cloning the human ORFeome.</title>
        <authorList>
            <person name="Collins J.E."/>
            <person name="Wright C.L."/>
            <person name="Edwards C.A."/>
            <person name="Davis M.P."/>
            <person name="Grinham J.A."/>
            <person name="Cole C.G."/>
            <person name="Goward M.E."/>
            <person name="Aguado B."/>
            <person name="Mallya M."/>
            <person name="Mokrab Y."/>
            <person name="Huckle E.J."/>
            <person name="Beare D.M."/>
            <person name="Dunham I."/>
        </authorList>
    </citation>
    <scope>NUCLEOTIDE SEQUENCE [LARGE SCALE MRNA]</scope>
</reference>
<reference key="3">
    <citation type="journal article" date="2004" name="Nat. Genet.">
        <title>Complete sequencing and characterization of 21,243 full-length human cDNAs.</title>
        <authorList>
            <person name="Ota T."/>
            <person name="Suzuki Y."/>
            <person name="Nishikawa T."/>
            <person name="Otsuki T."/>
            <person name="Sugiyama T."/>
            <person name="Irie R."/>
            <person name="Wakamatsu A."/>
            <person name="Hayashi K."/>
            <person name="Sato H."/>
            <person name="Nagai K."/>
            <person name="Kimura K."/>
            <person name="Makita H."/>
            <person name="Sekine M."/>
            <person name="Obayashi M."/>
            <person name="Nishi T."/>
            <person name="Shibahara T."/>
            <person name="Tanaka T."/>
            <person name="Ishii S."/>
            <person name="Yamamoto J."/>
            <person name="Saito K."/>
            <person name="Kawai Y."/>
            <person name="Isono Y."/>
            <person name="Nakamura Y."/>
            <person name="Nagahari K."/>
            <person name="Murakami K."/>
            <person name="Yasuda T."/>
            <person name="Iwayanagi T."/>
            <person name="Wagatsuma M."/>
            <person name="Shiratori A."/>
            <person name="Sudo H."/>
            <person name="Hosoiri T."/>
            <person name="Kaku Y."/>
            <person name="Kodaira H."/>
            <person name="Kondo H."/>
            <person name="Sugawara M."/>
            <person name="Takahashi M."/>
            <person name="Kanda K."/>
            <person name="Yokoi T."/>
            <person name="Furuya T."/>
            <person name="Kikkawa E."/>
            <person name="Omura Y."/>
            <person name="Abe K."/>
            <person name="Kamihara K."/>
            <person name="Katsuta N."/>
            <person name="Sato K."/>
            <person name="Tanikawa M."/>
            <person name="Yamazaki M."/>
            <person name="Ninomiya K."/>
            <person name="Ishibashi T."/>
            <person name="Yamashita H."/>
            <person name="Murakawa K."/>
            <person name="Fujimori K."/>
            <person name="Tanai H."/>
            <person name="Kimata M."/>
            <person name="Watanabe M."/>
            <person name="Hiraoka S."/>
            <person name="Chiba Y."/>
            <person name="Ishida S."/>
            <person name="Ono Y."/>
            <person name="Takiguchi S."/>
            <person name="Watanabe S."/>
            <person name="Yosida M."/>
            <person name="Hotuta T."/>
            <person name="Kusano J."/>
            <person name="Kanehori K."/>
            <person name="Takahashi-Fujii A."/>
            <person name="Hara H."/>
            <person name="Tanase T.-O."/>
            <person name="Nomura Y."/>
            <person name="Togiya S."/>
            <person name="Komai F."/>
            <person name="Hara R."/>
            <person name="Takeuchi K."/>
            <person name="Arita M."/>
            <person name="Imose N."/>
            <person name="Musashino K."/>
            <person name="Yuuki H."/>
            <person name="Oshima A."/>
            <person name="Sasaki N."/>
            <person name="Aotsuka S."/>
            <person name="Yoshikawa Y."/>
            <person name="Matsunawa H."/>
            <person name="Ichihara T."/>
            <person name="Shiohata N."/>
            <person name="Sano S."/>
            <person name="Moriya S."/>
            <person name="Momiyama H."/>
            <person name="Satoh N."/>
            <person name="Takami S."/>
            <person name="Terashima Y."/>
            <person name="Suzuki O."/>
            <person name="Nakagawa S."/>
            <person name="Senoh A."/>
            <person name="Mizoguchi H."/>
            <person name="Goto Y."/>
            <person name="Shimizu F."/>
            <person name="Wakebe H."/>
            <person name="Hishigaki H."/>
            <person name="Watanabe T."/>
            <person name="Sugiyama A."/>
            <person name="Takemoto M."/>
            <person name="Kawakami B."/>
            <person name="Yamazaki M."/>
            <person name="Watanabe K."/>
            <person name="Kumagai A."/>
            <person name="Itakura S."/>
            <person name="Fukuzumi Y."/>
            <person name="Fujimori Y."/>
            <person name="Komiyama M."/>
            <person name="Tashiro H."/>
            <person name="Tanigami A."/>
            <person name="Fujiwara T."/>
            <person name="Ono T."/>
            <person name="Yamada K."/>
            <person name="Fujii Y."/>
            <person name="Ozaki K."/>
            <person name="Hirao M."/>
            <person name="Ohmori Y."/>
            <person name="Kawabata A."/>
            <person name="Hikiji T."/>
            <person name="Kobatake N."/>
            <person name="Inagaki H."/>
            <person name="Ikema Y."/>
            <person name="Okamoto S."/>
            <person name="Okitani R."/>
            <person name="Kawakami T."/>
            <person name="Noguchi S."/>
            <person name="Itoh T."/>
            <person name="Shigeta K."/>
            <person name="Senba T."/>
            <person name="Matsumura K."/>
            <person name="Nakajima Y."/>
            <person name="Mizuno T."/>
            <person name="Morinaga M."/>
            <person name="Sasaki M."/>
            <person name="Togashi T."/>
            <person name="Oyama M."/>
            <person name="Hata H."/>
            <person name="Watanabe M."/>
            <person name="Komatsu T."/>
            <person name="Mizushima-Sugano J."/>
            <person name="Satoh T."/>
            <person name="Shirai Y."/>
            <person name="Takahashi Y."/>
            <person name="Nakagawa K."/>
            <person name="Okumura K."/>
            <person name="Nagase T."/>
            <person name="Nomura N."/>
            <person name="Kikuchi H."/>
            <person name="Masuho Y."/>
            <person name="Yamashita R."/>
            <person name="Nakai K."/>
            <person name="Yada T."/>
            <person name="Nakamura Y."/>
            <person name="Ohara O."/>
            <person name="Isogai T."/>
            <person name="Sugano S."/>
        </authorList>
    </citation>
    <scope>NUCLEOTIDE SEQUENCE [LARGE SCALE MRNA]</scope>
    <source>
        <tissue>Thymus</tissue>
    </source>
</reference>
<reference key="4">
    <citation type="journal article" date="2007" name="BMC Genomics">
        <title>The full-ORF clone resource of the German cDNA consortium.</title>
        <authorList>
            <person name="Bechtel S."/>
            <person name="Rosenfelder H."/>
            <person name="Duda A."/>
            <person name="Schmidt C.P."/>
            <person name="Ernst U."/>
            <person name="Wellenreuther R."/>
            <person name="Mehrle A."/>
            <person name="Schuster C."/>
            <person name="Bahr A."/>
            <person name="Bloecker H."/>
            <person name="Heubner D."/>
            <person name="Hoerlein A."/>
            <person name="Michel G."/>
            <person name="Wedler H."/>
            <person name="Koehrer K."/>
            <person name="Ottenwaelder B."/>
            <person name="Poustka A."/>
            <person name="Wiemann S."/>
            <person name="Schupp I."/>
        </authorList>
    </citation>
    <scope>NUCLEOTIDE SEQUENCE [LARGE SCALE MRNA]</scope>
    <source>
        <tissue>Uterine endothelium</tissue>
    </source>
</reference>
<reference key="5">
    <citation type="journal article" date="1999" name="Nature">
        <title>The DNA sequence of human chromosome 22.</title>
        <authorList>
            <person name="Dunham I."/>
            <person name="Hunt A.R."/>
            <person name="Collins J.E."/>
            <person name="Bruskiewich R."/>
            <person name="Beare D.M."/>
            <person name="Clamp M."/>
            <person name="Smink L.J."/>
            <person name="Ainscough R."/>
            <person name="Almeida J.P."/>
            <person name="Babbage A.K."/>
            <person name="Bagguley C."/>
            <person name="Bailey J."/>
            <person name="Barlow K.F."/>
            <person name="Bates K.N."/>
            <person name="Beasley O.P."/>
            <person name="Bird C.P."/>
            <person name="Blakey S.E."/>
            <person name="Bridgeman A.M."/>
            <person name="Buck D."/>
            <person name="Burgess J."/>
            <person name="Burrill W.D."/>
            <person name="Burton J."/>
            <person name="Carder C."/>
            <person name="Carter N.P."/>
            <person name="Chen Y."/>
            <person name="Clark G."/>
            <person name="Clegg S.M."/>
            <person name="Cobley V.E."/>
            <person name="Cole C.G."/>
            <person name="Collier R.E."/>
            <person name="Connor R."/>
            <person name="Conroy D."/>
            <person name="Corby N.R."/>
            <person name="Coville G.J."/>
            <person name="Cox A.V."/>
            <person name="Davis J."/>
            <person name="Dawson E."/>
            <person name="Dhami P.D."/>
            <person name="Dockree C."/>
            <person name="Dodsworth S.J."/>
            <person name="Durbin R.M."/>
            <person name="Ellington A.G."/>
            <person name="Evans K.L."/>
            <person name="Fey J.M."/>
            <person name="Fleming K."/>
            <person name="French L."/>
            <person name="Garner A.A."/>
            <person name="Gilbert J.G.R."/>
            <person name="Goward M.E."/>
            <person name="Grafham D.V."/>
            <person name="Griffiths M.N.D."/>
            <person name="Hall C."/>
            <person name="Hall R.E."/>
            <person name="Hall-Tamlyn G."/>
            <person name="Heathcott R.W."/>
            <person name="Ho S."/>
            <person name="Holmes S."/>
            <person name="Hunt S.E."/>
            <person name="Jones M.C."/>
            <person name="Kershaw J."/>
            <person name="Kimberley A.M."/>
            <person name="King A."/>
            <person name="Laird G.K."/>
            <person name="Langford C.F."/>
            <person name="Leversha M.A."/>
            <person name="Lloyd C."/>
            <person name="Lloyd D.M."/>
            <person name="Martyn I.D."/>
            <person name="Mashreghi-Mohammadi M."/>
            <person name="Matthews L.H."/>
            <person name="Mccann O.T."/>
            <person name="Mcclay J."/>
            <person name="Mclaren S."/>
            <person name="McMurray A.A."/>
            <person name="Milne S.A."/>
            <person name="Mortimore B.J."/>
            <person name="Odell C.N."/>
            <person name="Pavitt R."/>
            <person name="Pearce A.V."/>
            <person name="Pearson D."/>
            <person name="Phillimore B.J.C.T."/>
            <person name="Phillips S.H."/>
            <person name="Plumb R.W."/>
            <person name="Ramsay H."/>
            <person name="Ramsey Y."/>
            <person name="Rogers L."/>
            <person name="Ross M.T."/>
            <person name="Scott C.E."/>
            <person name="Sehra H.K."/>
            <person name="Skuce C.D."/>
            <person name="Smalley S."/>
            <person name="Smith M.L."/>
            <person name="Soderlund C."/>
            <person name="Spragon L."/>
            <person name="Steward C.A."/>
            <person name="Sulston J.E."/>
            <person name="Swann R.M."/>
            <person name="Vaudin M."/>
            <person name="Wall M."/>
            <person name="Wallis J.M."/>
            <person name="Whiteley M.N."/>
            <person name="Willey D.L."/>
            <person name="Williams L."/>
            <person name="Williams S.A."/>
            <person name="Williamson H."/>
            <person name="Wilmer T.E."/>
            <person name="Wilming L."/>
            <person name="Wright C.L."/>
            <person name="Hubbard T."/>
            <person name="Bentley D.R."/>
            <person name="Beck S."/>
            <person name="Rogers J."/>
            <person name="Shimizu N."/>
            <person name="Minoshima S."/>
            <person name="Kawasaki K."/>
            <person name="Sasaki T."/>
            <person name="Asakawa S."/>
            <person name="Kudoh J."/>
            <person name="Shintani A."/>
            <person name="Shibuya K."/>
            <person name="Yoshizaki Y."/>
            <person name="Aoki N."/>
            <person name="Mitsuyama S."/>
            <person name="Roe B.A."/>
            <person name="Chen F."/>
            <person name="Chu L."/>
            <person name="Crabtree J."/>
            <person name="Deschamps S."/>
            <person name="Do A."/>
            <person name="Do T."/>
            <person name="Dorman A."/>
            <person name="Fang F."/>
            <person name="Fu Y."/>
            <person name="Hu P."/>
            <person name="Hua A."/>
            <person name="Kenton S."/>
            <person name="Lai H."/>
            <person name="Lao H.I."/>
            <person name="Lewis J."/>
            <person name="Lewis S."/>
            <person name="Lin S.-P."/>
            <person name="Loh P."/>
            <person name="Malaj E."/>
            <person name="Nguyen T."/>
            <person name="Pan H."/>
            <person name="Phan S."/>
            <person name="Qi S."/>
            <person name="Qian Y."/>
            <person name="Ray L."/>
            <person name="Ren Q."/>
            <person name="Shaull S."/>
            <person name="Sloan D."/>
            <person name="Song L."/>
            <person name="Wang Q."/>
            <person name="Wang Y."/>
            <person name="Wang Z."/>
            <person name="White J."/>
            <person name="Willingham D."/>
            <person name="Wu H."/>
            <person name="Yao Z."/>
            <person name="Zhan M."/>
            <person name="Zhang G."/>
            <person name="Chissoe S."/>
            <person name="Murray J."/>
            <person name="Miller N."/>
            <person name="Minx P."/>
            <person name="Fulton R."/>
            <person name="Johnson D."/>
            <person name="Bemis G."/>
            <person name="Bentley D."/>
            <person name="Bradshaw H."/>
            <person name="Bourne S."/>
            <person name="Cordes M."/>
            <person name="Du Z."/>
            <person name="Fulton L."/>
            <person name="Goela D."/>
            <person name="Graves T."/>
            <person name="Hawkins J."/>
            <person name="Hinds K."/>
            <person name="Kemp K."/>
            <person name="Latreille P."/>
            <person name="Layman D."/>
            <person name="Ozersky P."/>
            <person name="Rohlfing T."/>
            <person name="Scheet P."/>
            <person name="Walker C."/>
            <person name="Wamsley A."/>
            <person name="Wohldmann P."/>
            <person name="Pepin K."/>
            <person name="Nelson J."/>
            <person name="Korf I."/>
            <person name="Bedell J.A."/>
            <person name="Hillier L.W."/>
            <person name="Mardis E."/>
            <person name="Waterston R."/>
            <person name="Wilson R."/>
            <person name="Emanuel B.S."/>
            <person name="Shaikh T."/>
            <person name="Kurahashi H."/>
            <person name="Saitta S."/>
            <person name="Budarf M.L."/>
            <person name="McDermid H.E."/>
            <person name="Johnson A."/>
            <person name="Wong A.C.C."/>
            <person name="Morrow B.E."/>
            <person name="Edelmann L."/>
            <person name="Kim U.J."/>
            <person name="Shizuya H."/>
            <person name="Simon M.I."/>
            <person name="Dumanski J.P."/>
            <person name="Peyrard M."/>
            <person name="Kedra D."/>
            <person name="Seroussi E."/>
            <person name="Fransson I."/>
            <person name="Tapia I."/>
            <person name="Bruder C.E."/>
            <person name="O'Brien K.P."/>
            <person name="Wilkinson P."/>
            <person name="Bodenteich A."/>
            <person name="Hartman K."/>
            <person name="Hu X."/>
            <person name="Khan A.S."/>
            <person name="Lane L."/>
            <person name="Tilahun Y."/>
            <person name="Wright H."/>
        </authorList>
    </citation>
    <scope>NUCLEOTIDE SEQUENCE [LARGE SCALE GENOMIC DNA]</scope>
</reference>
<reference key="6">
    <citation type="submission" date="2005-07" db="EMBL/GenBank/DDBJ databases">
        <authorList>
            <person name="Mural R.J."/>
            <person name="Istrail S."/>
            <person name="Sutton G.G."/>
            <person name="Florea L."/>
            <person name="Halpern A.L."/>
            <person name="Mobarry C.M."/>
            <person name="Lippert R."/>
            <person name="Walenz B."/>
            <person name="Shatkay H."/>
            <person name="Dew I."/>
            <person name="Miller J.R."/>
            <person name="Flanigan M.J."/>
            <person name="Edwards N.J."/>
            <person name="Bolanos R."/>
            <person name="Fasulo D."/>
            <person name="Halldorsson B.V."/>
            <person name="Hannenhalli S."/>
            <person name="Turner R."/>
            <person name="Yooseph S."/>
            <person name="Lu F."/>
            <person name="Nusskern D.R."/>
            <person name="Shue B.C."/>
            <person name="Zheng X.H."/>
            <person name="Zhong F."/>
            <person name="Delcher A.L."/>
            <person name="Huson D.H."/>
            <person name="Kravitz S.A."/>
            <person name="Mouchard L."/>
            <person name="Reinert K."/>
            <person name="Remington K.A."/>
            <person name="Clark A.G."/>
            <person name="Waterman M.S."/>
            <person name="Eichler E.E."/>
            <person name="Adams M.D."/>
            <person name="Hunkapiller M.W."/>
            <person name="Myers E.W."/>
            <person name="Venter J.C."/>
        </authorList>
    </citation>
    <scope>NUCLEOTIDE SEQUENCE [LARGE SCALE GENOMIC DNA]</scope>
</reference>
<reference key="7">
    <citation type="journal article" date="2004" name="Genome Res.">
        <title>The status, quality, and expansion of the NIH full-length cDNA project: the Mammalian Gene Collection (MGC).</title>
        <authorList>
            <consortium name="The MGC Project Team"/>
        </authorList>
    </citation>
    <scope>NUCLEOTIDE SEQUENCE [LARGE SCALE MRNA]</scope>
    <source>
        <tissue>Pancreas</tissue>
    </source>
</reference>
<reference key="8">
    <citation type="submission" date="1999-07" db="EMBL/GenBank/DDBJ databases">
        <authorList>
            <person name="Collins J.E."/>
            <person name="Huckle E.J."/>
        </authorList>
    </citation>
    <scope>NUCLEOTIDE SEQUENCE [MRNA] OF 34-407</scope>
</reference>
<reference key="9">
    <citation type="journal article" date="2005" name="DNA Res.">
        <title>Signal sequence and keyword trap in silico for selection of full-length human cDNAs encoding secretion or membrane proteins from oligo-capped cDNA libraries.</title>
        <authorList>
            <person name="Otsuki T."/>
            <person name="Ota T."/>
            <person name="Nishikawa T."/>
            <person name="Hayashi K."/>
            <person name="Suzuki Y."/>
            <person name="Yamamoto J."/>
            <person name="Wakamatsu A."/>
            <person name="Kimura K."/>
            <person name="Sakamoto K."/>
            <person name="Hatano N."/>
            <person name="Kawai Y."/>
            <person name="Ishii S."/>
            <person name="Saito K."/>
            <person name="Kojima S."/>
            <person name="Sugiyama T."/>
            <person name="Ono T."/>
            <person name="Okano K."/>
            <person name="Yoshikawa Y."/>
            <person name="Aotsuka S."/>
            <person name="Sasaki N."/>
            <person name="Hattori A."/>
            <person name="Okumura K."/>
            <person name="Nagai K."/>
            <person name="Sugano S."/>
            <person name="Isogai T."/>
        </authorList>
    </citation>
    <scope>NUCLEOTIDE SEQUENCE [LARGE SCALE MRNA] OF 102-407</scope>
    <source>
        <tissue>Teratocarcinoma</tissue>
    </source>
</reference>
<reference key="10">
    <citation type="journal article" date="2008" name="Proc. Natl. Acad. Sci. U.S.A.">
        <title>A quantitative atlas of mitotic phosphorylation.</title>
        <authorList>
            <person name="Dephoure N."/>
            <person name="Zhou C."/>
            <person name="Villen J."/>
            <person name="Beausoleil S.A."/>
            <person name="Bakalarski C.E."/>
            <person name="Elledge S.J."/>
            <person name="Gygi S.P."/>
        </authorList>
    </citation>
    <scope>IDENTIFICATION BY MASS SPECTROMETRY [LARGE SCALE ANALYSIS]</scope>
    <source>
        <tissue>Cervix carcinoma</tissue>
    </source>
</reference>
<reference key="11">
    <citation type="journal article" date="2009" name="Anal. Chem.">
        <title>Lys-N and trypsin cover complementary parts of the phosphoproteome in a refined SCX-based approach.</title>
        <authorList>
            <person name="Gauci S."/>
            <person name="Helbig A.O."/>
            <person name="Slijper M."/>
            <person name="Krijgsveld J."/>
            <person name="Heck A.J."/>
            <person name="Mohammed S."/>
        </authorList>
    </citation>
    <scope>IDENTIFICATION BY MASS SPECTROMETRY [LARGE SCALE ANALYSIS]</scope>
</reference>
<reference key="12">
    <citation type="journal article" date="2009" name="Sci. Signal.">
        <title>Quantitative phosphoproteomic analysis of T cell receptor signaling reveals system-wide modulation of protein-protein interactions.</title>
        <authorList>
            <person name="Mayya V."/>
            <person name="Lundgren D.H."/>
            <person name="Hwang S.-I."/>
            <person name="Rezaul K."/>
            <person name="Wu L."/>
            <person name="Eng J.K."/>
            <person name="Rodionov V."/>
            <person name="Han D.K."/>
        </authorList>
    </citation>
    <scope>PHOSPHORYLATION [LARGE SCALE ANALYSIS] AT SER-403</scope>
    <scope>IDENTIFICATION BY MASS SPECTROMETRY [LARGE SCALE ANALYSIS]</scope>
    <source>
        <tissue>Leukemic T-cell</tissue>
    </source>
</reference>
<reference key="13">
    <citation type="journal article" date="2010" name="Sci. Signal.">
        <title>Quantitative phosphoproteomics reveals widespread full phosphorylation site occupancy during mitosis.</title>
        <authorList>
            <person name="Olsen J.V."/>
            <person name="Vermeulen M."/>
            <person name="Santamaria A."/>
            <person name="Kumar C."/>
            <person name="Miller M.L."/>
            <person name="Jensen L.J."/>
            <person name="Gnad F."/>
            <person name="Cox J."/>
            <person name="Jensen T.S."/>
            <person name="Nigg E.A."/>
            <person name="Brunak S."/>
            <person name="Mann M."/>
        </authorList>
    </citation>
    <scope>PHOSPHORYLATION [LARGE SCALE ANALYSIS] AT SER-402 AND SER-403</scope>
    <scope>IDENTIFICATION BY MASS SPECTROMETRY [LARGE SCALE ANALYSIS]</scope>
    <source>
        <tissue>Cervix carcinoma</tissue>
    </source>
</reference>
<reference key="14">
    <citation type="journal article" date="2011" name="Sci. Signal.">
        <title>System-wide temporal characterization of the proteome and phosphoproteome of human embryonic stem cell differentiation.</title>
        <authorList>
            <person name="Rigbolt K.T."/>
            <person name="Prokhorova T.A."/>
            <person name="Akimov V."/>
            <person name="Henningsen J."/>
            <person name="Johansen P.T."/>
            <person name="Kratchmarova I."/>
            <person name="Kassem M."/>
            <person name="Mann M."/>
            <person name="Olsen J.V."/>
            <person name="Blagoev B."/>
        </authorList>
    </citation>
    <scope>PHOSPHORYLATION [LARGE SCALE ANALYSIS] AT SER-388</scope>
    <scope>IDENTIFICATION BY MASS SPECTROMETRY [LARGE SCALE ANALYSIS]</scope>
</reference>
<feature type="chain" id="PRO_0000211555" description="Transmembrane protein 184B">
    <location>
        <begin position="1"/>
        <end position="407"/>
    </location>
</feature>
<feature type="transmembrane region" description="Helical" evidence="1">
    <location>
        <begin position="40"/>
        <end position="60"/>
    </location>
</feature>
<feature type="transmembrane region" description="Helical" evidence="1">
    <location>
        <begin position="84"/>
        <end position="104"/>
    </location>
</feature>
<feature type="transmembrane region" description="Helical" evidence="1">
    <location>
        <begin position="121"/>
        <end position="141"/>
    </location>
</feature>
<feature type="transmembrane region" description="Helical" evidence="1">
    <location>
        <begin position="178"/>
        <end position="198"/>
    </location>
</feature>
<feature type="transmembrane region" description="Helical" evidence="1">
    <location>
        <begin position="214"/>
        <end position="234"/>
    </location>
</feature>
<feature type="transmembrane region" description="Helical" evidence="1">
    <location>
        <begin position="249"/>
        <end position="269"/>
    </location>
</feature>
<feature type="transmembrane region" description="Helical" evidence="1">
    <location>
        <begin position="290"/>
        <end position="310"/>
    </location>
</feature>
<feature type="region of interest" description="Disordered" evidence="2">
    <location>
        <begin position="1"/>
        <end position="25"/>
    </location>
</feature>
<feature type="region of interest" description="Disordered" evidence="2">
    <location>
        <begin position="369"/>
        <end position="395"/>
    </location>
</feature>
<feature type="compositionally biased region" description="Low complexity" evidence="2">
    <location>
        <begin position="9"/>
        <end position="25"/>
    </location>
</feature>
<feature type="modified residue" description="Phosphoserine" evidence="7">
    <location>
        <position position="388"/>
    </location>
</feature>
<feature type="modified residue" description="Phosphoserine" evidence="6">
    <location>
        <position position="402"/>
    </location>
</feature>
<feature type="modified residue" description="Phosphoserine" evidence="5 6">
    <location>
        <position position="403"/>
    </location>
</feature>
<feature type="sequence conflict" description="In Ref. 9; BAC11607." evidence="4" ref="9">
    <original>Y</original>
    <variation>C</variation>
    <location>
        <position position="218"/>
    </location>
</feature>
<feature type="sequence conflict" description="In Ref. 1; BAC77406." evidence="4" ref="1">
    <original>I</original>
    <variation>F</variation>
    <location>
        <position position="256"/>
    </location>
</feature>
<feature type="sequence conflict" description="In Ref. 9; BAC11607." evidence="4" ref="9">
    <original>Q</original>
    <variation>L</variation>
    <location>
        <position position="366"/>
    </location>
</feature>
<name>T184B_HUMAN</name>
<organism>
    <name type="scientific">Homo sapiens</name>
    <name type="common">Human</name>
    <dbReference type="NCBI Taxonomy" id="9606"/>
    <lineage>
        <taxon>Eukaryota</taxon>
        <taxon>Metazoa</taxon>
        <taxon>Chordata</taxon>
        <taxon>Craniata</taxon>
        <taxon>Vertebrata</taxon>
        <taxon>Euteleostomi</taxon>
        <taxon>Mammalia</taxon>
        <taxon>Eutheria</taxon>
        <taxon>Euarchontoglires</taxon>
        <taxon>Primates</taxon>
        <taxon>Haplorrhini</taxon>
        <taxon>Catarrhini</taxon>
        <taxon>Hominidae</taxon>
        <taxon>Homo</taxon>
    </lineage>
</organism>
<sequence length="407" mass="45562">MTVRGDVLAPDPASPTTAAASPSVSVIPEGSPTAMEQPVFLMTTAAQAISGFFVWTALLITCHQIYMHLRCYSCPNEQRYIVRILFIVPIYAFDSWLSLLFFTNDQYYVYFGTVRDCYEALVIYNFLSLCYEYLGGESSIMSEIRGKPIESSCMYGTCCLWGKTYSIGFLRFCKQATLQFCVVKPLMAVSTVVLQAFGKYRDGDFDVTSGYLYVTIIYNISVSLALYALFLFYFATRELLSPYSPVLKFFMVKSVIFLSFWQGMLLAILEKCGAIPKIHSARVSVGEGTVAAGYQDFIICVEMFFAALALRHAFTYKVYADKRLDAQGRCAPMKSISSSLKETMNPHDIVQDAIHNFSPAYQQYTQQSTLEPGPTWRGGAHGLSRSHSLSGARDNEKTLLLSSDDEF</sequence>
<evidence type="ECO:0000255" key="1"/>
<evidence type="ECO:0000256" key="2">
    <source>
        <dbReference type="SAM" id="MobiDB-lite"/>
    </source>
</evidence>
<evidence type="ECO:0000269" key="3">
    <source>
    </source>
</evidence>
<evidence type="ECO:0000305" key="4"/>
<evidence type="ECO:0007744" key="5">
    <source>
    </source>
</evidence>
<evidence type="ECO:0007744" key="6">
    <source>
    </source>
</evidence>
<evidence type="ECO:0007744" key="7">
    <source>
    </source>
</evidence>
<keyword id="KW-0472">Membrane</keyword>
<keyword id="KW-0597">Phosphoprotein</keyword>
<keyword id="KW-1267">Proteomics identification</keyword>
<keyword id="KW-1185">Reference proteome</keyword>
<keyword id="KW-0812">Transmembrane</keyword>
<keyword id="KW-1133">Transmembrane helix</keyword>
<protein>
    <recommendedName>
        <fullName>Transmembrane protein 184B</fullName>
    </recommendedName>
    <alternativeName>
        <fullName>Putative MAPK-activating protein FM08</fullName>
    </alternativeName>
</protein>
<accession>Q9Y519</accession>
<accession>A8K9D7</accession>
<accession>Q63HM8</accession>
<accession>Q7Z421</accession>
<accession>Q8NBM5</accession>
<accession>Q9UGT8</accession>
<accession>Q9UGT9</accession>
<accession>Q9UGV5</accession>
<dbReference type="EMBL" id="AB097053">
    <property type="protein sequence ID" value="BAC77406.1"/>
    <property type="molecule type" value="mRNA"/>
</dbReference>
<dbReference type="EMBL" id="CR456413">
    <property type="protein sequence ID" value="CAG30299.1"/>
    <property type="molecule type" value="mRNA"/>
</dbReference>
<dbReference type="EMBL" id="BX648345">
    <property type="protein sequence ID" value="CAH56159.1"/>
    <property type="molecule type" value="mRNA"/>
</dbReference>
<dbReference type="EMBL" id="AL020993">
    <property type="status" value="NOT_ANNOTATED_CDS"/>
    <property type="molecule type" value="Genomic_DNA"/>
</dbReference>
<dbReference type="EMBL" id="AL021977">
    <property type="status" value="NOT_ANNOTATED_CDS"/>
    <property type="molecule type" value="Genomic_DNA"/>
</dbReference>
<dbReference type="EMBL" id="CH471095">
    <property type="protein sequence ID" value="EAW60222.1"/>
    <property type="molecule type" value="Genomic_DNA"/>
</dbReference>
<dbReference type="EMBL" id="BC015489">
    <property type="protein sequence ID" value="AAH15489.2"/>
    <property type="molecule type" value="mRNA"/>
</dbReference>
<dbReference type="EMBL" id="AL096879">
    <property type="protein sequence ID" value="CAB51403.1"/>
    <property type="status" value="ALT_INIT"/>
    <property type="molecule type" value="mRNA"/>
</dbReference>
<dbReference type="EMBL" id="AK075417">
    <property type="protein sequence ID" value="BAC11607.1"/>
    <property type="status" value="ALT_INIT"/>
    <property type="molecule type" value="mRNA"/>
</dbReference>
<dbReference type="EMBL" id="AK292652">
    <property type="protein sequence ID" value="BAF85341.1"/>
    <property type="molecule type" value="mRNA"/>
</dbReference>
<dbReference type="CCDS" id="CCDS13969.2"/>
<dbReference type="RefSeq" id="NP_001182000.1">
    <property type="nucleotide sequence ID" value="NM_001195071.1"/>
</dbReference>
<dbReference type="RefSeq" id="NP_001182001.1">
    <property type="nucleotide sequence ID" value="NM_001195072.1"/>
</dbReference>
<dbReference type="RefSeq" id="NP_036396.2">
    <property type="nucleotide sequence ID" value="NM_012264.5"/>
</dbReference>
<dbReference type="BioGRID" id="117357">
    <property type="interactions" value="43"/>
</dbReference>
<dbReference type="FunCoup" id="Q9Y519">
    <property type="interactions" value="1393"/>
</dbReference>
<dbReference type="IntAct" id="Q9Y519">
    <property type="interactions" value="29"/>
</dbReference>
<dbReference type="STRING" id="9606.ENSP00000354441"/>
<dbReference type="TCDB" id="2.A.82.1.3">
    <property type="family name" value="the organic solute transporter (ost) family"/>
</dbReference>
<dbReference type="iPTMnet" id="Q9Y519"/>
<dbReference type="PhosphoSitePlus" id="Q9Y519"/>
<dbReference type="SwissPalm" id="Q9Y519"/>
<dbReference type="BioMuta" id="TMEM184B"/>
<dbReference type="DMDM" id="39932737"/>
<dbReference type="jPOST" id="Q9Y519"/>
<dbReference type="MassIVE" id="Q9Y519"/>
<dbReference type="PaxDb" id="9606-ENSP00000355210"/>
<dbReference type="PeptideAtlas" id="Q9Y519"/>
<dbReference type="ProteomicsDB" id="86272"/>
<dbReference type="Antibodypedia" id="12345">
    <property type="antibodies" value="88 antibodies from 29 providers"/>
</dbReference>
<dbReference type="DNASU" id="25829"/>
<dbReference type="Ensembl" id="ENST00000361684.8">
    <property type="protein sequence ID" value="ENSP00000354441.4"/>
    <property type="gene ID" value="ENSG00000198792.13"/>
</dbReference>
<dbReference type="Ensembl" id="ENST00000361906.8">
    <property type="protein sequence ID" value="ENSP00000355210.3"/>
    <property type="gene ID" value="ENSG00000198792.13"/>
</dbReference>
<dbReference type="GeneID" id="25829"/>
<dbReference type="KEGG" id="hsa:25829"/>
<dbReference type="MANE-Select" id="ENST00000361906.8">
    <property type="protein sequence ID" value="ENSP00000355210.3"/>
    <property type="RefSeq nucleotide sequence ID" value="NM_012264.5"/>
    <property type="RefSeq protein sequence ID" value="NP_036396.2"/>
</dbReference>
<dbReference type="UCSC" id="uc003avf.2">
    <property type="organism name" value="human"/>
</dbReference>
<dbReference type="AGR" id="HGNC:1310"/>
<dbReference type="CTD" id="25829"/>
<dbReference type="DisGeNET" id="25829"/>
<dbReference type="GeneCards" id="TMEM184B"/>
<dbReference type="HGNC" id="HGNC:1310">
    <property type="gene designation" value="TMEM184B"/>
</dbReference>
<dbReference type="HPA" id="ENSG00000198792">
    <property type="expression patterns" value="Low tissue specificity"/>
</dbReference>
<dbReference type="neXtProt" id="NX_Q9Y519"/>
<dbReference type="OpenTargets" id="ENSG00000198792"/>
<dbReference type="PharmGKB" id="PA162406140"/>
<dbReference type="VEuPathDB" id="HostDB:ENSG00000198792"/>
<dbReference type="eggNOG" id="KOG2641">
    <property type="taxonomic scope" value="Eukaryota"/>
</dbReference>
<dbReference type="GeneTree" id="ENSGT00940000153861"/>
<dbReference type="InParanoid" id="Q9Y519"/>
<dbReference type="OMA" id="IIKPIMA"/>
<dbReference type="OrthoDB" id="5348404at2759"/>
<dbReference type="PAN-GO" id="Q9Y519">
    <property type="GO annotations" value="3 GO annotations based on evolutionary models"/>
</dbReference>
<dbReference type="PhylomeDB" id="Q9Y519"/>
<dbReference type="TreeFam" id="TF314160"/>
<dbReference type="PathwayCommons" id="Q9Y519"/>
<dbReference type="SignaLink" id="Q9Y519"/>
<dbReference type="BioGRID-ORCS" id="25829">
    <property type="hits" value="16 hits in 1163 CRISPR screens"/>
</dbReference>
<dbReference type="ChiTaRS" id="TMEM184B">
    <property type="organism name" value="human"/>
</dbReference>
<dbReference type="GeneWiki" id="TMEM184B"/>
<dbReference type="GenomeRNAi" id="25829"/>
<dbReference type="Pharos" id="Q9Y519">
    <property type="development level" value="Tbio"/>
</dbReference>
<dbReference type="PRO" id="PR:Q9Y519"/>
<dbReference type="Proteomes" id="UP000005640">
    <property type="component" value="Chromosome 22"/>
</dbReference>
<dbReference type="RNAct" id="Q9Y519">
    <property type="molecule type" value="protein"/>
</dbReference>
<dbReference type="Bgee" id="ENSG00000198792">
    <property type="expression patterns" value="Expressed in C1 segment of cervical spinal cord and 208 other cell types or tissues"/>
</dbReference>
<dbReference type="ExpressionAtlas" id="Q9Y519">
    <property type="expression patterns" value="baseline and differential"/>
</dbReference>
<dbReference type="GO" id="GO:0016020">
    <property type="term" value="C:membrane"/>
    <property type="evidence" value="ECO:0000318"/>
    <property type="project" value="GO_Central"/>
</dbReference>
<dbReference type="GO" id="GO:0022857">
    <property type="term" value="F:transmembrane transporter activity"/>
    <property type="evidence" value="ECO:0000318"/>
    <property type="project" value="GO_Central"/>
</dbReference>
<dbReference type="InterPro" id="IPR005178">
    <property type="entry name" value="Ostalpha/TMEM184C"/>
</dbReference>
<dbReference type="PANTHER" id="PTHR23423">
    <property type="entry name" value="ORGANIC SOLUTE TRANSPORTER-RELATED"/>
    <property type="match status" value="1"/>
</dbReference>
<dbReference type="Pfam" id="PF03619">
    <property type="entry name" value="Solute_trans_a"/>
    <property type="match status" value="1"/>
</dbReference>
<dbReference type="SMART" id="SM01417">
    <property type="entry name" value="Solute_trans_a"/>
    <property type="match status" value="1"/>
</dbReference>
<proteinExistence type="evidence at protein level"/>
<gene>
    <name type="primary">TMEM184B</name>
    <name type="synonym">C22orf5</name>
    <name type="ORF">PSEC0108</name>
</gene>
<comment type="function">
    <text evidence="3">May activate the MAP kinase signaling pathway.</text>
</comment>
<comment type="subcellular location">
    <subcellularLocation>
        <location evidence="4">Membrane</location>
        <topology evidence="4">Multi-pass membrane protein</topology>
    </subcellularLocation>
</comment>
<comment type="similarity">
    <text evidence="4">Belongs to the TMEM184 family.</text>
</comment>
<comment type="sequence caution" evidence="4">
    <conflict type="erroneous initiation">
        <sequence resource="EMBL-CDS" id="BAC11607"/>
    </conflict>
</comment>
<comment type="sequence caution" evidence="4">
    <conflict type="erroneous initiation">
        <sequence resource="EMBL-CDS" id="CAB51403"/>
    </conflict>
</comment>